<dbReference type="EC" id="2.1.2.1" evidence="1"/>
<dbReference type="EMBL" id="CP000462">
    <property type="protein sequence ID" value="ABK36550.1"/>
    <property type="molecule type" value="Genomic_DNA"/>
</dbReference>
<dbReference type="RefSeq" id="WP_011707102.1">
    <property type="nucleotide sequence ID" value="NC_008570.1"/>
</dbReference>
<dbReference type="RefSeq" id="YP_857825.1">
    <property type="nucleotide sequence ID" value="NC_008570.1"/>
</dbReference>
<dbReference type="SMR" id="A0KNH4"/>
<dbReference type="STRING" id="380703.AHA_3336"/>
<dbReference type="EnsemblBacteria" id="ABK36550">
    <property type="protein sequence ID" value="ABK36550"/>
    <property type="gene ID" value="AHA_3336"/>
</dbReference>
<dbReference type="GeneID" id="4490116"/>
<dbReference type="KEGG" id="aha:AHA_3336"/>
<dbReference type="PATRIC" id="fig|380703.7.peg.3330"/>
<dbReference type="eggNOG" id="COG0112">
    <property type="taxonomic scope" value="Bacteria"/>
</dbReference>
<dbReference type="HOGENOM" id="CLU_022477_2_1_6"/>
<dbReference type="OrthoDB" id="9803846at2"/>
<dbReference type="UniPathway" id="UPA00193"/>
<dbReference type="UniPathway" id="UPA00288">
    <property type="reaction ID" value="UER01023"/>
</dbReference>
<dbReference type="Proteomes" id="UP000000756">
    <property type="component" value="Chromosome"/>
</dbReference>
<dbReference type="GO" id="GO:0005829">
    <property type="term" value="C:cytosol"/>
    <property type="evidence" value="ECO:0007669"/>
    <property type="project" value="TreeGrafter"/>
</dbReference>
<dbReference type="GO" id="GO:0004372">
    <property type="term" value="F:glycine hydroxymethyltransferase activity"/>
    <property type="evidence" value="ECO:0007669"/>
    <property type="project" value="UniProtKB-UniRule"/>
</dbReference>
<dbReference type="GO" id="GO:0030170">
    <property type="term" value="F:pyridoxal phosphate binding"/>
    <property type="evidence" value="ECO:0007669"/>
    <property type="project" value="UniProtKB-UniRule"/>
</dbReference>
<dbReference type="GO" id="GO:0019264">
    <property type="term" value="P:glycine biosynthetic process from serine"/>
    <property type="evidence" value="ECO:0007669"/>
    <property type="project" value="UniProtKB-UniRule"/>
</dbReference>
<dbReference type="GO" id="GO:0035999">
    <property type="term" value="P:tetrahydrofolate interconversion"/>
    <property type="evidence" value="ECO:0007669"/>
    <property type="project" value="UniProtKB-UniRule"/>
</dbReference>
<dbReference type="CDD" id="cd00378">
    <property type="entry name" value="SHMT"/>
    <property type="match status" value="1"/>
</dbReference>
<dbReference type="FunFam" id="3.40.640.10:FF:000001">
    <property type="entry name" value="Serine hydroxymethyltransferase"/>
    <property type="match status" value="1"/>
</dbReference>
<dbReference type="FunFam" id="3.90.1150.10:FF:000003">
    <property type="entry name" value="Serine hydroxymethyltransferase"/>
    <property type="match status" value="1"/>
</dbReference>
<dbReference type="Gene3D" id="3.90.1150.10">
    <property type="entry name" value="Aspartate Aminotransferase, domain 1"/>
    <property type="match status" value="1"/>
</dbReference>
<dbReference type="Gene3D" id="3.40.640.10">
    <property type="entry name" value="Type I PLP-dependent aspartate aminotransferase-like (Major domain)"/>
    <property type="match status" value="1"/>
</dbReference>
<dbReference type="HAMAP" id="MF_00051">
    <property type="entry name" value="SHMT"/>
    <property type="match status" value="1"/>
</dbReference>
<dbReference type="InterPro" id="IPR015424">
    <property type="entry name" value="PyrdxlP-dep_Trfase"/>
</dbReference>
<dbReference type="InterPro" id="IPR015421">
    <property type="entry name" value="PyrdxlP-dep_Trfase_major"/>
</dbReference>
<dbReference type="InterPro" id="IPR015422">
    <property type="entry name" value="PyrdxlP-dep_Trfase_small"/>
</dbReference>
<dbReference type="InterPro" id="IPR001085">
    <property type="entry name" value="Ser_HO-MeTrfase"/>
</dbReference>
<dbReference type="InterPro" id="IPR049943">
    <property type="entry name" value="Ser_HO-MeTrfase-like"/>
</dbReference>
<dbReference type="InterPro" id="IPR019798">
    <property type="entry name" value="Ser_HO-MeTrfase_PLP_BS"/>
</dbReference>
<dbReference type="InterPro" id="IPR039429">
    <property type="entry name" value="SHMT-like_dom"/>
</dbReference>
<dbReference type="NCBIfam" id="NF000586">
    <property type="entry name" value="PRK00011.1"/>
    <property type="match status" value="1"/>
</dbReference>
<dbReference type="PANTHER" id="PTHR11680">
    <property type="entry name" value="SERINE HYDROXYMETHYLTRANSFERASE"/>
    <property type="match status" value="1"/>
</dbReference>
<dbReference type="PANTHER" id="PTHR11680:SF50">
    <property type="entry name" value="SERINE HYDROXYMETHYLTRANSFERASE"/>
    <property type="match status" value="1"/>
</dbReference>
<dbReference type="Pfam" id="PF00464">
    <property type="entry name" value="SHMT"/>
    <property type="match status" value="1"/>
</dbReference>
<dbReference type="PIRSF" id="PIRSF000412">
    <property type="entry name" value="SHMT"/>
    <property type="match status" value="1"/>
</dbReference>
<dbReference type="SUPFAM" id="SSF53383">
    <property type="entry name" value="PLP-dependent transferases"/>
    <property type="match status" value="1"/>
</dbReference>
<dbReference type="PROSITE" id="PS00096">
    <property type="entry name" value="SHMT"/>
    <property type="match status" value="1"/>
</dbReference>
<protein>
    <recommendedName>
        <fullName evidence="1">Serine hydroxymethyltransferase</fullName>
        <shortName evidence="1">SHMT</shortName>
        <shortName evidence="1">Serine methylase</shortName>
        <ecNumber evidence="1">2.1.2.1</ecNumber>
    </recommendedName>
</protein>
<comment type="function">
    <text evidence="1">Catalyzes the reversible interconversion of serine and glycine with tetrahydrofolate (THF) serving as the one-carbon carrier. This reaction serves as the major source of one-carbon groups required for the biosynthesis of purines, thymidylate, methionine, and other important biomolecules. Also exhibits THF-independent aldolase activity toward beta-hydroxyamino acids, producing glycine and aldehydes, via a retro-aldol mechanism.</text>
</comment>
<comment type="catalytic activity">
    <reaction evidence="1">
        <text>(6R)-5,10-methylene-5,6,7,8-tetrahydrofolate + glycine + H2O = (6S)-5,6,7,8-tetrahydrofolate + L-serine</text>
        <dbReference type="Rhea" id="RHEA:15481"/>
        <dbReference type="ChEBI" id="CHEBI:15377"/>
        <dbReference type="ChEBI" id="CHEBI:15636"/>
        <dbReference type="ChEBI" id="CHEBI:33384"/>
        <dbReference type="ChEBI" id="CHEBI:57305"/>
        <dbReference type="ChEBI" id="CHEBI:57453"/>
        <dbReference type="EC" id="2.1.2.1"/>
    </reaction>
</comment>
<comment type="cofactor">
    <cofactor evidence="1">
        <name>pyridoxal 5'-phosphate</name>
        <dbReference type="ChEBI" id="CHEBI:597326"/>
    </cofactor>
</comment>
<comment type="pathway">
    <text evidence="1">One-carbon metabolism; tetrahydrofolate interconversion.</text>
</comment>
<comment type="pathway">
    <text evidence="1">Amino-acid biosynthesis; glycine biosynthesis; glycine from L-serine: step 1/1.</text>
</comment>
<comment type="subunit">
    <text evidence="1">Homodimer.</text>
</comment>
<comment type="subcellular location">
    <subcellularLocation>
        <location evidence="1">Cytoplasm</location>
    </subcellularLocation>
</comment>
<comment type="similarity">
    <text evidence="1">Belongs to the SHMT family.</text>
</comment>
<feature type="chain" id="PRO_1000006213" description="Serine hydroxymethyltransferase">
    <location>
        <begin position="1"/>
        <end position="417"/>
    </location>
</feature>
<feature type="binding site" evidence="1">
    <location>
        <position position="121"/>
    </location>
    <ligand>
        <name>(6S)-5,6,7,8-tetrahydrofolate</name>
        <dbReference type="ChEBI" id="CHEBI:57453"/>
    </ligand>
</feature>
<feature type="binding site" evidence="1">
    <location>
        <begin position="125"/>
        <end position="127"/>
    </location>
    <ligand>
        <name>(6S)-5,6,7,8-tetrahydrofolate</name>
        <dbReference type="ChEBI" id="CHEBI:57453"/>
    </ligand>
</feature>
<feature type="binding site" evidence="1">
    <location>
        <begin position="355"/>
        <end position="357"/>
    </location>
    <ligand>
        <name>(6S)-5,6,7,8-tetrahydrofolate</name>
        <dbReference type="ChEBI" id="CHEBI:57453"/>
    </ligand>
</feature>
<feature type="site" description="Plays an important role in substrate specificity" evidence="1">
    <location>
        <position position="228"/>
    </location>
</feature>
<feature type="modified residue" description="N6-(pyridoxal phosphate)lysine" evidence="1">
    <location>
        <position position="229"/>
    </location>
</feature>
<organism>
    <name type="scientific">Aeromonas hydrophila subsp. hydrophila (strain ATCC 7966 / DSM 30187 / BCRC 13018 / CCUG 14551 / JCM 1027 / KCTC 2358 / NCIMB 9240 / NCTC 8049)</name>
    <dbReference type="NCBI Taxonomy" id="380703"/>
    <lineage>
        <taxon>Bacteria</taxon>
        <taxon>Pseudomonadati</taxon>
        <taxon>Pseudomonadota</taxon>
        <taxon>Gammaproteobacteria</taxon>
        <taxon>Aeromonadales</taxon>
        <taxon>Aeromonadaceae</taxon>
        <taxon>Aeromonas</taxon>
    </lineage>
</organism>
<name>GLYA_AERHH</name>
<evidence type="ECO:0000255" key="1">
    <source>
        <dbReference type="HAMAP-Rule" id="MF_00051"/>
    </source>
</evidence>
<sequence>MLKRDMTIAGYDPELWQAITDETRRQEEHIELIASENYTSPRVMEAQGSQLTNKYAEGYPSKRYYGGCEYVDVVETLAIERAKELFGATYANVQPHSGSQANSAVYMALLQPGDTVLGMNLAHGGHLTHGSPVNFSGKLYNIIPYGIDESGKIDYDDMERQAVEHKPKMMIGGFSAYSGIVDWARMREIADKVGAWLFVDMAHVAGLIAAGVYPNPVPHAHVVTSTTHKTLAGPRGGLILSAADDEELYKKLNSAVFPGGQGGPLMHVIAGKAVAFKEALEPEFKTYQAQVVKNAKAMAATFIERGYKIVSGGTDNHLMLVDLIGRELTGKEADAALGKANITVNKNSVPNDPRSPFVTSGVRIGTPAITRRGFKEAESIQLTNWICDVLDNHDNDAVLATVREQVLDICRRFPVYA</sequence>
<keyword id="KW-0028">Amino-acid biosynthesis</keyword>
<keyword id="KW-0963">Cytoplasm</keyword>
<keyword id="KW-0554">One-carbon metabolism</keyword>
<keyword id="KW-0663">Pyridoxal phosphate</keyword>
<keyword id="KW-1185">Reference proteome</keyword>
<keyword id="KW-0808">Transferase</keyword>
<proteinExistence type="inferred from homology"/>
<reference key="1">
    <citation type="journal article" date="2006" name="J. Bacteriol.">
        <title>Genome sequence of Aeromonas hydrophila ATCC 7966T: jack of all trades.</title>
        <authorList>
            <person name="Seshadri R."/>
            <person name="Joseph S.W."/>
            <person name="Chopra A.K."/>
            <person name="Sha J."/>
            <person name="Shaw J."/>
            <person name="Graf J."/>
            <person name="Haft D.H."/>
            <person name="Wu M."/>
            <person name="Ren Q."/>
            <person name="Rosovitz M.J."/>
            <person name="Madupu R."/>
            <person name="Tallon L."/>
            <person name="Kim M."/>
            <person name="Jin S."/>
            <person name="Vuong H."/>
            <person name="Stine O.C."/>
            <person name="Ali A."/>
            <person name="Horneman A.J."/>
            <person name="Heidelberg J.F."/>
        </authorList>
    </citation>
    <scope>NUCLEOTIDE SEQUENCE [LARGE SCALE GENOMIC DNA]</scope>
    <source>
        <strain>ATCC 7966 / DSM 30187 / BCRC 13018 / CCUG 14551 / JCM 1027 / KCTC 2358 / NCIMB 9240 / NCTC 8049</strain>
    </source>
</reference>
<gene>
    <name evidence="1" type="primary">glyA</name>
    <name type="ordered locus">AHA_3336</name>
</gene>
<accession>A0KNH4</accession>